<feature type="chain" id="PRO_1000077752" description="UvrABC system protein C">
    <location>
        <begin position="1"/>
        <end position="671"/>
    </location>
</feature>
<feature type="domain" description="GIY-YIG" evidence="1">
    <location>
        <begin position="16"/>
        <end position="95"/>
    </location>
</feature>
<feature type="domain" description="UVR" evidence="1">
    <location>
        <begin position="207"/>
        <end position="242"/>
    </location>
</feature>
<name>UVRC_PAEAT</name>
<proteinExistence type="inferred from homology"/>
<protein>
    <recommendedName>
        <fullName evidence="1">UvrABC system protein C</fullName>
        <shortName evidence="1">Protein UvrC</shortName>
    </recommendedName>
    <alternativeName>
        <fullName evidence="1">Excinuclease ABC subunit C</fullName>
    </alternativeName>
</protein>
<accession>A1R6G5</accession>
<evidence type="ECO:0000255" key="1">
    <source>
        <dbReference type="HAMAP-Rule" id="MF_00203"/>
    </source>
</evidence>
<gene>
    <name evidence="1" type="primary">uvrC</name>
    <name type="ordered locus">AAur_2083</name>
</gene>
<sequence>MADPASYRPQTGEIPTTPGVYRFRDPHGRVIYVGKAKNLRSRLNSYFANPAGLLPKTHAMVHAASSVEWTVVGSELESLQLEYTWIKEFKPRFNVVFRDDKTYPYLAVTMGEKYPRVQVMRGERRKGTRYFGPYTAGAIRETMDTLLRVFPVRSCSAGVFKRAESSGRPCLLGYIDKCSAPCVGRVTPDEHRGLAEDFCSFMGGEAKRFISRLEKDMAAAVAELDYERAAGLRDDIIALRKVFERNAVVLAEDTDADVFALHEDELEASVQVFHVRGGRVRGQRGWVVEKVEDATTPELIEHLLQQVYGEDSEVQGRIPREVLVPENPSNHAELMEWLGGLRGARVDIRVPQRGDKAALMSTVRENAEQALKLHKTRRAGDITVRSLALQELQEALEIPVPLLRIECFDISHVQGTNVVASMVVVEDGLPKKSDYRKFSITGAAATDDTAAMHDVLTRRFRHYLTDKAAQVPIVSGEIVNPTRAGAKSGTELPPSDLDVPAPKAKFAYPPNLVVVDGGQPQVNAAARALAELGIDDVYVVGLAKRLEEVWLPDSDFPVILPRTSQGLYLLQRIRDEAHRFAITFHRQKRGKAMTVSVLDGVPGLGEAKRKALVAHFGSLKKIKAASVEELTSAKGIGPALAAAVVQHLGSTEDAGERAPAVNMTTGEILES</sequence>
<comment type="function">
    <text evidence="1">The UvrABC repair system catalyzes the recognition and processing of DNA lesions. UvrC both incises the 5' and 3' sides of the lesion. The N-terminal half is responsible for the 3' incision and the C-terminal half is responsible for the 5' incision.</text>
</comment>
<comment type="subunit">
    <text evidence="1">Interacts with UvrB in an incision complex.</text>
</comment>
<comment type="subcellular location">
    <subcellularLocation>
        <location evidence="1">Cytoplasm</location>
    </subcellularLocation>
</comment>
<comment type="similarity">
    <text evidence="1">Belongs to the UvrC family.</text>
</comment>
<dbReference type="EMBL" id="CP000474">
    <property type="protein sequence ID" value="ABM06838.1"/>
    <property type="molecule type" value="Genomic_DNA"/>
</dbReference>
<dbReference type="RefSeq" id="WP_011774771.1">
    <property type="nucleotide sequence ID" value="NC_008711.1"/>
</dbReference>
<dbReference type="SMR" id="A1R6G5"/>
<dbReference type="STRING" id="290340.AAur_2083"/>
<dbReference type="KEGG" id="aau:AAur_2083"/>
<dbReference type="eggNOG" id="COG0322">
    <property type="taxonomic scope" value="Bacteria"/>
</dbReference>
<dbReference type="HOGENOM" id="CLU_014841_1_1_11"/>
<dbReference type="OrthoDB" id="9804933at2"/>
<dbReference type="Proteomes" id="UP000000637">
    <property type="component" value="Chromosome"/>
</dbReference>
<dbReference type="GO" id="GO:0005737">
    <property type="term" value="C:cytoplasm"/>
    <property type="evidence" value="ECO:0007669"/>
    <property type="project" value="UniProtKB-SubCell"/>
</dbReference>
<dbReference type="GO" id="GO:0009380">
    <property type="term" value="C:excinuclease repair complex"/>
    <property type="evidence" value="ECO:0007669"/>
    <property type="project" value="InterPro"/>
</dbReference>
<dbReference type="GO" id="GO:0003677">
    <property type="term" value="F:DNA binding"/>
    <property type="evidence" value="ECO:0007669"/>
    <property type="project" value="UniProtKB-UniRule"/>
</dbReference>
<dbReference type="GO" id="GO:0009381">
    <property type="term" value="F:excinuclease ABC activity"/>
    <property type="evidence" value="ECO:0007669"/>
    <property type="project" value="UniProtKB-UniRule"/>
</dbReference>
<dbReference type="GO" id="GO:0006289">
    <property type="term" value="P:nucleotide-excision repair"/>
    <property type="evidence" value="ECO:0007669"/>
    <property type="project" value="UniProtKB-UniRule"/>
</dbReference>
<dbReference type="GO" id="GO:0009432">
    <property type="term" value="P:SOS response"/>
    <property type="evidence" value="ECO:0007669"/>
    <property type="project" value="UniProtKB-UniRule"/>
</dbReference>
<dbReference type="CDD" id="cd10434">
    <property type="entry name" value="GIY-YIG_UvrC_Cho"/>
    <property type="match status" value="1"/>
</dbReference>
<dbReference type="FunFam" id="3.40.1440.10:FF:000001">
    <property type="entry name" value="UvrABC system protein C"/>
    <property type="match status" value="1"/>
</dbReference>
<dbReference type="Gene3D" id="1.10.150.20">
    <property type="entry name" value="5' to 3' exonuclease, C-terminal subdomain"/>
    <property type="match status" value="1"/>
</dbReference>
<dbReference type="Gene3D" id="3.40.1440.10">
    <property type="entry name" value="GIY-YIG endonuclease"/>
    <property type="match status" value="1"/>
</dbReference>
<dbReference type="Gene3D" id="4.10.860.10">
    <property type="entry name" value="UVR domain"/>
    <property type="match status" value="1"/>
</dbReference>
<dbReference type="Gene3D" id="3.30.420.340">
    <property type="entry name" value="UvrC, RNAse H endonuclease domain"/>
    <property type="match status" value="1"/>
</dbReference>
<dbReference type="HAMAP" id="MF_00203">
    <property type="entry name" value="UvrC"/>
    <property type="match status" value="1"/>
</dbReference>
<dbReference type="InterPro" id="IPR000305">
    <property type="entry name" value="GIY-YIG_endonuc"/>
</dbReference>
<dbReference type="InterPro" id="IPR035901">
    <property type="entry name" value="GIY-YIG_endonuc_sf"/>
</dbReference>
<dbReference type="InterPro" id="IPR047296">
    <property type="entry name" value="GIY-YIG_UvrC_Cho"/>
</dbReference>
<dbReference type="InterPro" id="IPR003583">
    <property type="entry name" value="Hlx-hairpin-Hlx_DNA-bd_motif"/>
</dbReference>
<dbReference type="InterPro" id="IPR010994">
    <property type="entry name" value="RuvA_2-like"/>
</dbReference>
<dbReference type="InterPro" id="IPR001943">
    <property type="entry name" value="UVR_dom"/>
</dbReference>
<dbReference type="InterPro" id="IPR036876">
    <property type="entry name" value="UVR_dom_sf"/>
</dbReference>
<dbReference type="InterPro" id="IPR050066">
    <property type="entry name" value="UvrABC_protein_C"/>
</dbReference>
<dbReference type="InterPro" id="IPR004791">
    <property type="entry name" value="UvrC"/>
</dbReference>
<dbReference type="InterPro" id="IPR001162">
    <property type="entry name" value="UvrC_RNase_H_dom"/>
</dbReference>
<dbReference type="InterPro" id="IPR038476">
    <property type="entry name" value="UvrC_RNase_H_dom_sf"/>
</dbReference>
<dbReference type="NCBIfam" id="NF001824">
    <property type="entry name" value="PRK00558.1-5"/>
    <property type="match status" value="1"/>
</dbReference>
<dbReference type="NCBIfam" id="TIGR00194">
    <property type="entry name" value="uvrC"/>
    <property type="match status" value="1"/>
</dbReference>
<dbReference type="PANTHER" id="PTHR30562:SF1">
    <property type="entry name" value="UVRABC SYSTEM PROTEIN C"/>
    <property type="match status" value="1"/>
</dbReference>
<dbReference type="PANTHER" id="PTHR30562">
    <property type="entry name" value="UVRC/OXIDOREDUCTASE"/>
    <property type="match status" value="1"/>
</dbReference>
<dbReference type="Pfam" id="PF01541">
    <property type="entry name" value="GIY-YIG"/>
    <property type="match status" value="1"/>
</dbReference>
<dbReference type="Pfam" id="PF14520">
    <property type="entry name" value="HHH_5"/>
    <property type="match status" value="1"/>
</dbReference>
<dbReference type="Pfam" id="PF02151">
    <property type="entry name" value="UVR"/>
    <property type="match status" value="1"/>
</dbReference>
<dbReference type="Pfam" id="PF22920">
    <property type="entry name" value="UvrC_RNaseH"/>
    <property type="match status" value="1"/>
</dbReference>
<dbReference type="Pfam" id="PF08459">
    <property type="entry name" value="UvrC_RNaseH_dom"/>
    <property type="match status" value="1"/>
</dbReference>
<dbReference type="SMART" id="SM00465">
    <property type="entry name" value="GIYc"/>
    <property type="match status" value="1"/>
</dbReference>
<dbReference type="SMART" id="SM00278">
    <property type="entry name" value="HhH1"/>
    <property type="match status" value="2"/>
</dbReference>
<dbReference type="SUPFAM" id="SSF46600">
    <property type="entry name" value="C-terminal UvrC-binding domain of UvrB"/>
    <property type="match status" value="1"/>
</dbReference>
<dbReference type="SUPFAM" id="SSF82771">
    <property type="entry name" value="GIY-YIG endonuclease"/>
    <property type="match status" value="1"/>
</dbReference>
<dbReference type="SUPFAM" id="SSF47781">
    <property type="entry name" value="RuvA domain 2-like"/>
    <property type="match status" value="1"/>
</dbReference>
<dbReference type="PROSITE" id="PS50164">
    <property type="entry name" value="GIY_YIG"/>
    <property type="match status" value="1"/>
</dbReference>
<dbReference type="PROSITE" id="PS50151">
    <property type="entry name" value="UVR"/>
    <property type="match status" value="1"/>
</dbReference>
<dbReference type="PROSITE" id="PS50165">
    <property type="entry name" value="UVRC"/>
    <property type="match status" value="1"/>
</dbReference>
<organism>
    <name type="scientific">Paenarthrobacter aurescens (strain TC1)</name>
    <dbReference type="NCBI Taxonomy" id="290340"/>
    <lineage>
        <taxon>Bacteria</taxon>
        <taxon>Bacillati</taxon>
        <taxon>Actinomycetota</taxon>
        <taxon>Actinomycetes</taxon>
        <taxon>Micrococcales</taxon>
        <taxon>Micrococcaceae</taxon>
        <taxon>Paenarthrobacter</taxon>
    </lineage>
</organism>
<keyword id="KW-0963">Cytoplasm</keyword>
<keyword id="KW-0227">DNA damage</keyword>
<keyword id="KW-0228">DNA excision</keyword>
<keyword id="KW-0234">DNA repair</keyword>
<keyword id="KW-0267">Excision nuclease</keyword>
<keyword id="KW-0742">SOS response</keyword>
<reference key="1">
    <citation type="journal article" date="2006" name="PLoS Genet.">
        <title>Secrets of soil survival revealed by the genome sequence of Arthrobacter aurescens TC1.</title>
        <authorList>
            <person name="Mongodin E.F."/>
            <person name="Shapir N."/>
            <person name="Daugherty S.C."/>
            <person name="DeBoy R.T."/>
            <person name="Emerson J.B."/>
            <person name="Shvartzbeyn A."/>
            <person name="Radune D."/>
            <person name="Vamathevan J."/>
            <person name="Riggs F."/>
            <person name="Grinberg V."/>
            <person name="Khouri H.M."/>
            <person name="Wackett L.P."/>
            <person name="Nelson K.E."/>
            <person name="Sadowsky M.J."/>
        </authorList>
    </citation>
    <scope>NUCLEOTIDE SEQUENCE [LARGE SCALE GENOMIC DNA]</scope>
    <source>
        <strain>TC1</strain>
    </source>
</reference>